<gene>
    <name evidence="1" type="primary">psbA</name>
</gene>
<dbReference type="EC" id="1.10.3.9" evidence="1"/>
<dbReference type="EMBL" id="EU262891">
    <property type="protein sequence ID" value="ABX10101.1"/>
    <property type="molecule type" value="Genomic_DNA"/>
</dbReference>
<dbReference type="RefSeq" id="YP_001687431.1">
    <property type="nucleotide sequence ID" value="NC_010362.1"/>
</dbReference>
<dbReference type="SMR" id="B0Z5A8"/>
<dbReference type="GeneID" id="5955384"/>
<dbReference type="GO" id="GO:0009535">
    <property type="term" value="C:chloroplast thylakoid membrane"/>
    <property type="evidence" value="ECO:0007669"/>
    <property type="project" value="UniProtKB-SubCell"/>
</dbReference>
<dbReference type="GO" id="GO:0009523">
    <property type="term" value="C:photosystem II"/>
    <property type="evidence" value="ECO:0007669"/>
    <property type="project" value="UniProtKB-KW"/>
</dbReference>
<dbReference type="GO" id="GO:0016168">
    <property type="term" value="F:chlorophyll binding"/>
    <property type="evidence" value="ECO:0007669"/>
    <property type="project" value="UniProtKB-UniRule"/>
</dbReference>
<dbReference type="GO" id="GO:0045156">
    <property type="term" value="F:electron transporter, transferring electrons within the cyclic electron transport pathway of photosynthesis activity"/>
    <property type="evidence" value="ECO:0007669"/>
    <property type="project" value="InterPro"/>
</dbReference>
<dbReference type="GO" id="GO:0005506">
    <property type="term" value="F:iron ion binding"/>
    <property type="evidence" value="ECO:0007669"/>
    <property type="project" value="UniProtKB-UniRule"/>
</dbReference>
<dbReference type="GO" id="GO:0016682">
    <property type="term" value="F:oxidoreductase activity, acting on diphenols and related substances as donors, oxygen as acceptor"/>
    <property type="evidence" value="ECO:0007669"/>
    <property type="project" value="UniProtKB-UniRule"/>
</dbReference>
<dbReference type="GO" id="GO:0010242">
    <property type="term" value="F:oxygen evolving activity"/>
    <property type="evidence" value="ECO:0007669"/>
    <property type="project" value="UniProtKB-EC"/>
</dbReference>
<dbReference type="GO" id="GO:0009772">
    <property type="term" value="P:photosynthetic electron transport in photosystem II"/>
    <property type="evidence" value="ECO:0007669"/>
    <property type="project" value="InterPro"/>
</dbReference>
<dbReference type="GO" id="GO:0009635">
    <property type="term" value="P:response to herbicide"/>
    <property type="evidence" value="ECO:0007669"/>
    <property type="project" value="UniProtKB-KW"/>
</dbReference>
<dbReference type="CDD" id="cd09289">
    <property type="entry name" value="Photosystem-II_D1"/>
    <property type="match status" value="1"/>
</dbReference>
<dbReference type="FunFam" id="1.20.85.10:FF:000002">
    <property type="entry name" value="Photosystem II protein D1"/>
    <property type="match status" value="1"/>
</dbReference>
<dbReference type="Gene3D" id="1.20.85.10">
    <property type="entry name" value="Photosystem II protein D1-like"/>
    <property type="match status" value="1"/>
</dbReference>
<dbReference type="HAMAP" id="MF_01379">
    <property type="entry name" value="PSII_PsbA_D1"/>
    <property type="match status" value="1"/>
</dbReference>
<dbReference type="InterPro" id="IPR055266">
    <property type="entry name" value="D1/D2"/>
</dbReference>
<dbReference type="InterPro" id="IPR036854">
    <property type="entry name" value="Photo_II_D1/D2_sf"/>
</dbReference>
<dbReference type="InterPro" id="IPR000484">
    <property type="entry name" value="Photo_RC_L/M"/>
</dbReference>
<dbReference type="InterPro" id="IPR055265">
    <property type="entry name" value="Photo_RC_L/M_CS"/>
</dbReference>
<dbReference type="InterPro" id="IPR005867">
    <property type="entry name" value="PSII_D1"/>
</dbReference>
<dbReference type="NCBIfam" id="TIGR01151">
    <property type="entry name" value="psbA"/>
    <property type="match status" value="1"/>
</dbReference>
<dbReference type="PANTHER" id="PTHR33149:SF12">
    <property type="entry name" value="PHOTOSYSTEM II D2 PROTEIN"/>
    <property type="match status" value="1"/>
</dbReference>
<dbReference type="PANTHER" id="PTHR33149">
    <property type="entry name" value="PHOTOSYSTEM II PROTEIN D1"/>
    <property type="match status" value="1"/>
</dbReference>
<dbReference type="Pfam" id="PF00124">
    <property type="entry name" value="Photo_RC"/>
    <property type="match status" value="1"/>
</dbReference>
<dbReference type="PRINTS" id="PR00256">
    <property type="entry name" value="REACTNCENTRE"/>
</dbReference>
<dbReference type="SUPFAM" id="SSF81483">
    <property type="entry name" value="Bacterial photosystem II reaction centre, L and M subunits"/>
    <property type="match status" value="1"/>
</dbReference>
<dbReference type="PROSITE" id="PS00244">
    <property type="entry name" value="REACTION_CENTER"/>
    <property type="match status" value="1"/>
</dbReference>
<protein>
    <recommendedName>
        <fullName evidence="1">Photosystem II protein D1</fullName>
        <shortName evidence="1">PSII D1 protein</shortName>
        <ecNumber evidence="1">1.10.3.9</ecNumber>
    </recommendedName>
    <alternativeName>
        <fullName evidence="1">Photosystem II Q(B) protein</fullName>
    </alternativeName>
</protein>
<accession>B0Z5A8</accession>
<evidence type="ECO:0000255" key="1">
    <source>
        <dbReference type="HAMAP-Rule" id="MF_01379"/>
    </source>
</evidence>
<comment type="function">
    <text evidence="1">Photosystem II (PSII) is a light-driven water:plastoquinone oxidoreductase that uses light energy to abstract electrons from H(2)O, generating O(2) and a proton gradient subsequently used for ATP formation. It consists of a core antenna complex that captures photons, and an electron transfer chain that converts photonic excitation into a charge separation. The D1/D2 (PsbA/PsbD) reaction center heterodimer binds P680, the primary electron donor of PSII as well as several subsequent electron acceptors.</text>
</comment>
<comment type="catalytic activity">
    <reaction evidence="1">
        <text>2 a plastoquinone + 4 hnu + 2 H2O = 2 a plastoquinol + O2</text>
        <dbReference type="Rhea" id="RHEA:36359"/>
        <dbReference type="Rhea" id="RHEA-COMP:9561"/>
        <dbReference type="Rhea" id="RHEA-COMP:9562"/>
        <dbReference type="ChEBI" id="CHEBI:15377"/>
        <dbReference type="ChEBI" id="CHEBI:15379"/>
        <dbReference type="ChEBI" id="CHEBI:17757"/>
        <dbReference type="ChEBI" id="CHEBI:30212"/>
        <dbReference type="ChEBI" id="CHEBI:62192"/>
        <dbReference type="EC" id="1.10.3.9"/>
    </reaction>
</comment>
<comment type="cofactor">
    <text evidence="1">The D1/D2 heterodimer binds P680, chlorophylls that are the primary electron donor of PSII, and subsequent electron acceptors. It shares a non-heme iron and each subunit binds pheophytin, quinone, additional chlorophylls, carotenoids and lipids. D1 provides most of the ligands for the Mn4-Ca-O5 cluster of the oxygen-evolving complex (OEC). There is also a Cl(-1) ion associated with D1 and D2, which is required for oxygen evolution. The PSII complex binds additional chlorophylls, carotenoids and specific lipids.</text>
</comment>
<comment type="subunit">
    <text evidence="1">PSII is composed of 1 copy each of membrane proteins PsbA, PsbB, PsbC, PsbD, PsbE, PsbF, PsbH, PsbI, PsbJ, PsbK, PsbL, PsbM, PsbT, PsbX, PsbY, PsbZ, Psb30/Ycf12, at least 3 peripheral proteins of the oxygen-evolving complex and a large number of cofactors. It forms dimeric complexes.</text>
</comment>
<comment type="subcellular location">
    <subcellularLocation>
        <location evidence="1">Plastid</location>
        <location evidence="1">Chloroplast thylakoid membrane</location>
        <topology evidence="1">Multi-pass membrane protein</topology>
    </subcellularLocation>
</comment>
<comment type="PTM">
    <text evidence="1">Tyr-161 forms a radical intermediate that is referred to as redox-active TyrZ, YZ or Y-Z.</text>
</comment>
<comment type="PTM">
    <text evidence="1">C-terminally processed by CTPA; processing is essential to allow assembly of the oxygen-evolving complex and thus photosynthetic growth.</text>
</comment>
<comment type="miscellaneous">
    <text evidence="1">2 of the reaction center chlorophylls (ChlD1 and ChlD2) are entirely coordinated by water.</text>
</comment>
<comment type="miscellaneous">
    <text evidence="1">Herbicides such as atrazine, BNT, diuron or ioxynil bind in the Q(B) binding site and block subsequent electron transfer.</text>
</comment>
<comment type="similarity">
    <text evidence="1">Belongs to the reaction center PufL/M/PsbA/D family.</text>
</comment>
<feature type="initiator methionine" description="Removed" evidence="1">
    <location>
        <position position="1"/>
    </location>
</feature>
<feature type="chain" id="PRO_0000340038" description="Photosystem II protein D1" evidence="1">
    <location>
        <begin position="2"/>
        <end position="344"/>
    </location>
</feature>
<feature type="propeptide" id="PRO_0000340039" evidence="1">
    <location>
        <begin position="345"/>
        <end position="353"/>
    </location>
</feature>
<feature type="transmembrane region" description="Helical" evidence="1">
    <location>
        <begin position="29"/>
        <end position="46"/>
    </location>
</feature>
<feature type="transmembrane region" description="Helical" evidence="1">
    <location>
        <begin position="118"/>
        <end position="133"/>
    </location>
</feature>
<feature type="transmembrane region" description="Helical" evidence="1">
    <location>
        <begin position="142"/>
        <end position="156"/>
    </location>
</feature>
<feature type="transmembrane region" description="Helical" evidence="1">
    <location>
        <begin position="197"/>
        <end position="218"/>
    </location>
</feature>
<feature type="transmembrane region" description="Helical" evidence="1">
    <location>
        <begin position="274"/>
        <end position="288"/>
    </location>
</feature>
<feature type="binding site" description="axial binding residue" evidence="1">
    <location>
        <position position="118"/>
    </location>
    <ligand>
        <name>chlorophyll a</name>
        <dbReference type="ChEBI" id="CHEBI:58416"/>
        <label>ChlzD1</label>
    </ligand>
    <ligandPart>
        <name>Mg</name>
        <dbReference type="ChEBI" id="CHEBI:25107"/>
    </ligandPart>
</feature>
<feature type="binding site" evidence="1">
    <location>
        <position position="126"/>
    </location>
    <ligand>
        <name>pheophytin a</name>
        <dbReference type="ChEBI" id="CHEBI:136840"/>
        <label>D1</label>
    </ligand>
</feature>
<feature type="binding site" evidence="1">
    <location>
        <position position="170"/>
    </location>
    <ligand>
        <name>[CaMn4O5] cluster</name>
        <dbReference type="ChEBI" id="CHEBI:189552"/>
    </ligand>
</feature>
<feature type="binding site" evidence="1">
    <location>
        <position position="189"/>
    </location>
    <ligand>
        <name>[CaMn4O5] cluster</name>
        <dbReference type="ChEBI" id="CHEBI:189552"/>
    </ligand>
</feature>
<feature type="binding site" description="axial binding residue" evidence="1">
    <location>
        <position position="198"/>
    </location>
    <ligand>
        <name>chlorophyll a</name>
        <dbReference type="ChEBI" id="CHEBI:58416"/>
        <label>PD1</label>
    </ligand>
    <ligandPart>
        <name>Mg</name>
        <dbReference type="ChEBI" id="CHEBI:25107"/>
    </ligandPart>
</feature>
<feature type="binding site" evidence="1">
    <location>
        <position position="215"/>
    </location>
    <ligand>
        <name>a quinone</name>
        <dbReference type="ChEBI" id="CHEBI:132124"/>
        <label>B</label>
    </ligand>
</feature>
<feature type="binding site" evidence="1">
    <location>
        <position position="215"/>
    </location>
    <ligand>
        <name>Fe cation</name>
        <dbReference type="ChEBI" id="CHEBI:24875"/>
        <note>ligand shared with heterodimeric partner</note>
    </ligand>
</feature>
<feature type="binding site" evidence="1">
    <location>
        <begin position="264"/>
        <end position="265"/>
    </location>
    <ligand>
        <name>a quinone</name>
        <dbReference type="ChEBI" id="CHEBI:132124"/>
        <label>B</label>
    </ligand>
</feature>
<feature type="binding site" evidence="1">
    <location>
        <position position="272"/>
    </location>
    <ligand>
        <name>Fe cation</name>
        <dbReference type="ChEBI" id="CHEBI:24875"/>
        <note>ligand shared with heterodimeric partner</note>
    </ligand>
</feature>
<feature type="binding site" evidence="1">
    <location>
        <position position="332"/>
    </location>
    <ligand>
        <name>[CaMn4O5] cluster</name>
        <dbReference type="ChEBI" id="CHEBI:189552"/>
    </ligand>
</feature>
<feature type="binding site" evidence="1">
    <location>
        <position position="333"/>
    </location>
    <ligand>
        <name>[CaMn4O5] cluster</name>
        <dbReference type="ChEBI" id="CHEBI:189552"/>
    </ligand>
</feature>
<feature type="binding site" evidence="1">
    <location>
        <position position="342"/>
    </location>
    <ligand>
        <name>[CaMn4O5] cluster</name>
        <dbReference type="ChEBI" id="CHEBI:189552"/>
    </ligand>
</feature>
<feature type="binding site" evidence="1">
    <location>
        <position position="344"/>
    </location>
    <ligand>
        <name>[CaMn4O5] cluster</name>
        <dbReference type="ChEBI" id="CHEBI:189552"/>
    </ligand>
</feature>
<feature type="site" description="Tyrosine radical intermediate" evidence="1">
    <location>
        <position position="161"/>
    </location>
</feature>
<feature type="site" description="Stabilizes free radical intermediate" evidence="1">
    <location>
        <position position="190"/>
    </location>
</feature>
<feature type="site" description="Cleavage; by CTPA" evidence="1">
    <location>
        <begin position="344"/>
        <end position="345"/>
    </location>
</feature>
<feature type="modified residue" description="N-acetylthreonine" evidence="1">
    <location>
        <position position="2"/>
    </location>
</feature>
<feature type="modified residue" description="Phosphothreonine" evidence="1">
    <location>
        <position position="2"/>
    </location>
</feature>
<proteinExistence type="inferred from homology"/>
<name>PSBA_OENPA</name>
<keyword id="KW-0007">Acetylation</keyword>
<keyword id="KW-0106">Calcium</keyword>
<keyword id="KW-0148">Chlorophyll</keyword>
<keyword id="KW-0150">Chloroplast</keyword>
<keyword id="KW-0157">Chromophore</keyword>
<keyword id="KW-0249">Electron transport</keyword>
<keyword id="KW-0359">Herbicide resistance</keyword>
<keyword id="KW-0408">Iron</keyword>
<keyword id="KW-0460">Magnesium</keyword>
<keyword id="KW-0464">Manganese</keyword>
<keyword id="KW-0472">Membrane</keyword>
<keyword id="KW-0479">Metal-binding</keyword>
<keyword id="KW-0560">Oxidoreductase</keyword>
<keyword id="KW-0597">Phosphoprotein</keyword>
<keyword id="KW-0602">Photosynthesis</keyword>
<keyword id="KW-0604">Photosystem II</keyword>
<keyword id="KW-0934">Plastid</keyword>
<keyword id="KW-0793">Thylakoid</keyword>
<keyword id="KW-0812">Transmembrane</keyword>
<keyword id="KW-1133">Transmembrane helix</keyword>
<keyword id="KW-0813">Transport</keyword>
<geneLocation type="chloroplast"/>
<sequence length="353" mass="38937">MTAILERRESESLWGRFCNWITSTENRLYIGWFGVLMIPTLLTATSVFIIAFIAAPPVDIDGIREPVSGSLLYGNNIISGAIIPTSAAIGLHFYPIWEAASVDEWLYNGGPYELIVLHFLLGVACYMGREWELSFRLGMRPWIAVAYSAPVAAATAVFLIYPIGQGSFSDGMPLGISGTFNFMIVFQAEHNILMHPFHMLGVAGVFGGSLFSAMHGSLVTSSLIRETTENESANEGYRFGQEEETYNIVAAHGYFGRLIFQYASFNNSRSLHFFLAAWPVVGIWFTALGISTMAFNLNGFNFNQSVVDSQGRVINTWADIINRANLGMEVMHERNAHNFPLDLAAVEAPSTNG</sequence>
<reference key="1">
    <citation type="journal article" date="2008" name="Nucleic Acids Res.">
        <title>The complete nucleotide sequences of the five genetically distinct plastid genomes of Oenothera, subsection Oenothera: I. Sequence evaluation and plastome evolution.</title>
        <authorList>
            <person name="Greiner S."/>
            <person name="Wang X."/>
            <person name="Rauwolf U."/>
            <person name="Silber M.V."/>
            <person name="Mayer K."/>
            <person name="Meurer J."/>
            <person name="Haberer G."/>
            <person name="Herrmann R.G."/>
        </authorList>
    </citation>
    <scope>NUCLEOTIDE SEQUENCE [LARGE SCALE GENOMIC DNA]</scope>
    <source>
        <strain>cv. Atrovirens</strain>
    </source>
</reference>
<organism>
    <name type="scientific">Oenothera parviflora</name>
    <name type="common">Small-flowered evening primrose</name>
    <name type="synonym">Oenothera cruciata</name>
    <dbReference type="NCBI Taxonomy" id="482429"/>
    <lineage>
        <taxon>Eukaryota</taxon>
        <taxon>Viridiplantae</taxon>
        <taxon>Streptophyta</taxon>
        <taxon>Embryophyta</taxon>
        <taxon>Tracheophyta</taxon>
        <taxon>Spermatophyta</taxon>
        <taxon>Magnoliopsida</taxon>
        <taxon>eudicotyledons</taxon>
        <taxon>Gunneridae</taxon>
        <taxon>Pentapetalae</taxon>
        <taxon>rosids</taxon>
        <taxon>malvids</taxon>
        <taxon>Myrtales</taxon>
        <taxon>Onagraceae</taxon>
        <taxon>Onagroideae</taxon>
        <taxon>Onagreae</taxon>
        <taxon>Oenothera</taxon>
    </lineage>
</organism>